<comment type="function">
    <text evidence="5">Catalyzes DNA unwinding and is involved in telomerase-independent telomere maintenance.</text>
</comment>
<comment type="induction">
    <text evidence="5">Induced in absence of telomerase TLC1.</text>
</comment>
<comment type="similarity">
    <text evidence="4">Belongs to the helicase family. Yeast subtelomeric Y' repeat subfamily.</text>
</comment>
<comment type="sequence caution" evidence="4">
    <conflict type="erroneous gene model prediction">
        <sequence resource="EMBL-CDS" id="CAA87988"/>
    </conflict>
</comment>
<comment type="sequence caution" evidence="4">
    <conflict type="erroneous gene model prediction">
        <sequence resource="EMBL-CDS" id="CAA87989"/>
    </conflict>
</comment>
<comment type="sequence caution" evidence="4">
    <conflict type="erroneous initiation">
        <sequence resource="EMBL-CDS" id="CAA97521"/>
    </conflict>
    <text>Truncated N-terminus.</text>
</comment>
<comment type="sequence caution" evidence="4">
    <conflict type="erroneous initiation">
        <sequence resource="EMBL-CDS" id="CAA97522"/>
    </conflict>
    <text>Truncated N-terminus.</text>
</comment>
<comment type="sequence caution" evidence="4">
    <conflict type="erroneous initiation">
        <sequence resource="EMBL-CDS" id="DAA09258"/>
    </conflict>
    <text>Truncated N-terminus.</text>
</comment>
<protein>
    <recommendedName>
        <fullName>Y' element ATP-dependent helicase YLL067C</fullName>
        <ecNumber evidence="5">5.6.2.-</ecNumber>
    </recommendedName>
</protein>
<sequence length="1374" mass="154988">MKVSDRRKFEKANFDEFESALNNKNDLVHCPSITLFESIPTEVRSFYEDEKSGLIKVVKFRTGAMDRKRSFEKIVVSVMVGKNVQKFLTFVEDEPDFQGGPIPSKYLIPKKINLMVYTLFQVHTLKFNRKDYDTLSLFYLNRGYYNELSFRVLERCHEIASARPNDSSTMRTFTDFVSGAPIVRSLQKSTIRRYGYNLAPHMFLLLHVDELSIFSAYQASLPGEKKVDTERLKRDLCPRKPIEIKYFSQICNDMMNKKDRLGDVLATAQRIRRRYNKNGSSEPRLKTLDGLTSERWIQWLGLESDYHCSFSSTRNAEDVVAGEAASSDHDQKISRVTRKRPREPKSTNDILVAGQKLFGSSFEFRDLHQLRLCHEIYMADTPSVAVQAPPGYGKTELFHLPLIALASKGDVKYVSFLFVPYTVLLANCMIRLGRCGCLNVAPVRNFIEEGCDGVTDLYVGIYDDLASTNFTDRIAAWENIVECTFRTNNVKLGYLIVDEFHNFETEVYRQSQFGGITNLDFDAFEKAIFLSGTAPEAVADAALQRIGLTGLAKKSMDINELKRSEDLSRGLSSYPTRMFNLIKEKSEVPLGHVHKIWKKVESQPEEALKLLLALFEIEPESKAIVVASTTNEVEELACSWRKYFRVVWIHGKLGAAEKVSRTKEFVTDGSMRVLIGTKLVTEGIDIKQLMMVIMLDNRLNIIELIQGVGRLRDGGLCYLLSRKNSWAARNRKGELPPIKEGCITEQVREFYGLESKKGKKGQHVGCCGSRTDLSADTVELIERMDRLAEKQATASMSIVALPSSFQESNSSDRCRKYCSSDEDSNTCIHGSANASTNATTNSSTNATTTASTNVRTSATTTASINVRTSATTTESTNSSTNATTTASTNVRTSATTTASINVRTSATTTESTNSNTSATTTESTDSNTSATTTESTDSSTNATTTASINVRTSATTTESTNSNTNATTTESTNSSTNATTTEGTNSNTSATTTASTNSSTNATTTESTNASAKEDANKDGNAEDNRFHPVTDINKESYKRKGSQMVLLERKKLKAQFPNTSENMNVLQFLGFRSDEIKHLFLYGIDVYFCPEGVFTQYGLCKGCQKMFELCVCWAGQKVSYRRMAWEALAVERMLRNDEEYKEYLEDIEPYHGDPVGYLKFFSVKRGEIYSQIQRNYAWYLAITRRRETISVLDSTRGKQGSQVFRMSGRQIKELYYKVWSNLRESKTEVLQYFLNWDEKKCREEWEAKDDTVFVEALEKVGVFQRLRSMTSAGLQGPQYVKLQFSRHHRQLRSRYELSLGMHLRDQLALGVTPSKVPHWTAFLSMLIGLFYNKTFRQKLEYLLEQISEVWLLPHWVDLANVEVLAADNTRVPC</sequence>
<evidence type="ECO:0000255" key="1">
    <source>
        <dbReference type="PROSITE-ProRule" id="PRU00541"/>
    </source>
</evidence>
<evidence type="ECO:0000255" key="2">
    <source>
        <dbReference type="PROSITE-ProRule" id="PRU00542"/>
    </source>
</evidence>
<evidence type="ECO:0000256" key="3">
    <source>
        <dbReference type="SAM" id="MobiDB-lite"/>
    </source>
</evidence>
<evidence type="ECO:0000305" key="4"/>
<evidence type="ECO:0000305" key="5">
    <source>
    </source>
</evidence>
<organism>
    <name type="scientific">Saccharomyces cerevisiae (strain ATCC 204508 / S288c)</name>
    <name type="common">Baker's yeast</name>
    <dbReference type="NCBI Taxonomy" id="559292"/>
    <lineage>
        <taxon>Eukaryota</taxon>
        <taxon>Fungi</taxon>
        <taxon>Dikarya</taxon>
        <taxon>Ascomycota</taxon>
        <taxon>Saccharomycotina</taxon>
        <taxon>Saccharomycetes</taxon>
        <taxon>Saccharomycetales</taxon>
        <taxon>Saccharomycetaceae</taxon>
        <taxon>Saccharomyces</taxon>
    </lineage>
</organism>
<reference key="1">
    <citation type="journal article" date="1997" name="Nature">
        <title>The nucleotide sequence of Saccharomyces cerevisiae chromosome XII.</title>
        <authorList>
            <person name="Johnston M."/>
            <person name="Hillier L.W."/>
            <person name="Riles L."/>
            <person name="Albermann K."/>
            <person name="Andre B."/>
            <person name="Ansorge W."/>
            <person name="Benes V."/>
            <person name="Brueckner M."/>
            <person name="Delius H."/>
            <person name="Dubois E."/>
            <person name="Duesterhoeft A."/>
            <person name="Entian K.-D."/>
            <person name="Floeth M."/>
            <person name="Goffeau A."/>
            <person name="Hebling U."/>
            <person name="Heumann K."/>
            <person name="Heuss-Neitzel D."/>
            <person name="Hilbert H."/>
            <person name="Hilger F."/>
            <person name="Kleine K."/>
            <person name="Koetter P."/>
            <person name="Louis E.J."/>
            <person name="Messenguy F."/>
            <person name="Mewes H.-W."/>
            <person name="Miosga T."/>
            <person name="Moestl D."/>
            <person name="Mueller-Auer S."/>
            <person name="Nentwich U."/>
            <person name="Obermaier B."/>
            <person name="Piravandi E."/>
            <person name="Pohl T.M."/>
            <person name="Portetelle D."/>
            <person name="Purnelle B."/>
            <person name="Rechmann S."/>
            <person name="Rieger M."/>
            <person name="Rinke M."/>
            <person name="Rose M."/>
            <person name="Scharfe M."/>
            <person name="Scherens B."/>
            <person name="Scholler P."/>
            <person name="Schwager C."/>
            <person name="Schwarz S."/>
            <person name="Underwood A.P."/>
            <person name="Urrestarazu L.A."/>
            <person name="Vandenbol M."/>
            <person name="Verhasselt P."/>
            <person name="Vierendeels F."/>
            <person name="Voet M."/>
            <person name="Volckaert G."/>
            <person name="Voss H."/>
            <person name="Wambutt R."/>
            <person name="Wedler E."/>
            <person name="Wedler H."/>
            <person name="Zimmermann F.K."/>
            <person name="Zollner A."/>
            <person name="Hani J."/>
            <person name="Hoheisel J.D."/>
        </authorList>
    </citation>
    <scope>NUCLEOTIDE SEQUENCE [LARGE SCALE GENOMIC DNA]</scope>
    <source>
        <strain>ATCC 204508 / S288c</strain>
    </source>
</reference>
<reference key="2">
    <citation type="submission" date="1995-01" db="EMBL/GenBank/DDBJ databases">
        <title>Sequence of a 37 kb DNA fragment from chromosome XII of Saccharomyces cerevisiae including the subtelomeric region of the left arm.</title>
        <authorList>
            <person name="Wedler H."/>
            <person name="Wambutt R."/>
        </authorList>
    </citation>
    <scope>NUCLEOTIDE SEQUENCE [GENOMIC DNA] OF 1-566</scope>
    <source>
        <strain>ATCC 204511 / S288c / AB972</strain>
    </source>
</reference>
<reference key="3">
    <citation type="journal article" date="2014" name="G3 (Bethesda)">
        <title>The reference genome sequence of Saccharomyces cerevisiae: Then and now.</title>
        <authorList>
            <person name="Engel S.R."/>
            <person name="Dietrich F.S."/>
            <person name="Fisk D.G."/>
            <person name="Binkley G."/>
            <person name="Balakrishnan R."/>
            <person name="Costanzo M.C."/>
            <person name="Dwight S.S."/>
            <person name="Hitz B.C."/>
            <person name="Karra K."/>
            <person name="Nash R.S."/>
            <person name="Weng S."/>
            <person name="Wong E.D."/>
            <person name="Lloyd P."/>
            <person name="Skrzypek M.S."/>
            <person name="Miyasato S.R."/>
            <person name="Simison M."/>
            <person name="Cherry J.M."/>
        </authorList>
    </citation>
    <scope>GENOME REANNOTATION</scope>
    <source>
        <strain>ATCC 204508 / S288c</strain>
    </source>
</reference>
<reference key="4">
    <citation type="journal article" date="1998" name="J. Biol. Chem.">
        <title>Y'-Help1, a DNA helicase encoded by the yeast subtelomeric Y' element, is induced in survivors defective for telomerase.</title>
        <authorList>
            <person name="Yamada M."/>
            <person name="Hayatsu N."/>
            <person name="Matsuura A."/>
            <person name="Ishikawa F."/>
        </authorList>
    </citation>
    <scope>FUNCTION</scope>
    <scope>INDUCTION</scope>
</reference>
<gene>
    <name type="ordered locus">YLL067C</name>
    <name type="ORF">L0111</name>
    <name type="ORF">L0503</name>
    <name type="ORF">L0509</name>
</gene>
<name>YL067_YEAST</name>
<dbReference type="EC" id="5.6.2.-" evidence="5"/>
<dbReference type="EMBL" id="Z73171">
    <property type="protein sequence ID" value="CAA97521.1"/>
    <property type="status" value="ALT_INIT"/>
    <property type="molecule type" value="Genomic_DNA"/>
</dbReference>
<dbReference type="EMBL" id="Z73172">
    <property type="protein sequence ID" value="CAA97522.1"/>
    <property type="status" value="ALT_INIT"/>
    <property type="molecule type" value="Genomic_DNA"/>
</dbReference>
<dbReference type="EMBL" id="Z47973">
    <property type="protein sequence ID" value="CAA87988.1"/>
    <property type="status" value="ALT_SEQ"/>
    <property type="molecule type" value="Genomic_DNA"/>
</dbReference>
<dbReference type="EMBL" id="Z47973">
    <property type="protein sequence ID" value="CAA87989.1"/>
    <property type="status" value="ALT_SEQ"/>
    <property type="molecule type" value="Genomic_DNA"/>
</dbReference>
<dbReference type="EMBL" id="BK006945">
    <property type="protein sequence ID" value="DAA09258.1"/>
    <property type="status" value="ALT_INIT"/>
    <property type="molecule type" value="Genomic_DNA"/>
</dbReference>
<dbReference type="PIR" id="S64819">
    <property type="entry name" value="S64819"/>
</dbReference>
<dbReference type="RefSeq" id="NP_013033.1">
    <property type="nucleotide sequence ID" value="NM_001181887.1"/>
</dbReference>
<dbReference type="BioGRID" id="31250">
    <property type="interactions" value="4"/>
</dbReference>
<dbReference type="DIP" id="DIP-8845N"/>
<dbReference type="FunCoup" id="Q07888">
    <property type="interactions" value="53"/>
</dbReference>
<dbReference type="PeptideAtlas" id="Q07888"/>
<dbReference type="GeneID" id="850659"/>
<dbReference type="KEGG" id="sce:YLL067C"/>
<dbReference type="AGR" id="SGD:S000003990"/>
<dbReference type="SGD" id="S000003990">
    <property type="gene designation" value="YLL067C"/>
</dbReference>
<dbReference type="InParanoid" id="Q07888"/>
<dbReference type="OrthoDB" id="4060407at2759"/>
<dbReference type="BioCyc" id="YEAST:G3O-32161-MONOMER"/>
<dbReference type="Reactome" id="R-SCE-5689880">
    <property type="pathway name" value="Ub-specific processing proteases"/>
</dbReference>
<dbReference type="PRO" id="PR:Q07888"/>
<dbReference type="Proteomes" id="UP000002311">
    <property type="component" value="Chromosome XII"/>
</dbReference>
<dbReference type="RNAct" id="Q07888">
    <property type="molecule type" value="protein"/>
</dbReference>
<dbReference type="GO" id="GO:0005737">
    <property type="term" value="C:cytoplasm"/>
    <property type="evidence" value="ECO:0000318"/>
    <property type="project" value="GO_Central"/>
</dbReference>
<dbReference type="GO" id="GO:0005524">
    <property type="term" value="F:ATP binding"/>
    <property type="evidence" value="ECO:0007669"/>
    <property type="project" value="UniProtKB-KW"/>
</dbReference>
<dbReference type="GO" id="GO:0016887">
    <property type="term" value="F:ATP hydrolysis activity"/>
    <property type="evidence" value="ECO:0007669"/>
    <property type="project" value="RHEA"/>
</dbReference>
<dbReference type="GO" id="GO:0004386">
    <property type="term" value="F:helicase activity"/>
    <property type="evidence" value="ECO:0000250"/>
    <property type="project" value="SGD"/>
</dbReference>
<dbReference type="GO" id="GO:0003676">
    <property type="term" value="F:nucleic acid binding"/>
    <property type="evidence" value="ECO:0007669"/>
    <property type="project" value="InterPro"/>
</dbReference>
<dbReference type="GO" id="GO:0000722">
    <property type="term" value="P:telomere maintenance via recombination"/>
    <property type="evidence" value="ECO:0007669"/>
    <property type="project" value="UniProtKB-ARBA"/>
</dbReference>
<dbReference type="FunFam" id="3.40.50.300:FF:001914">
    <property type="entry name" value="YML133C-like protein"/>
    <property type="match status" value="1"/>
</dbReference>
<dbReference type="FunFam" id="3.40.50.300:FF:002410">
    <property type="entry name" value="YML133C-like protein"/>
    <property type="match status" value="1"/>
</dbReference>
<dbReference type="Gene3D" id="3.40.50.300">
    <property type="entry name" value="P-loop containing nucleotide triphosphate hydrolases"/>
    <property type="match status" value="1"/>
</dbReference>
<dbReference type="InterPro" id="IPR011545">
    <property type="entry name" value="DEAD/DEAH_box_helicase_dom"/>
</dbReference>
<dbReference type="InterPro" id="IPR014001">
    <property type="entry name" value="Helicase_ATP-bd"/>
</dbReference>
<dbReference type="InterPro" id="IPR001650">
    <property type="entry name" value="Helicase_C-like"/>
</dbReference>
<dbReference type="InterPro" id="IPR027417">
    <property type="entry name" value="P-loop_NTPase"/>
</dbReference>
<dbReference type="InterPro" id="IPR021646">
    <property type="entry name" value="Sir1_ORC-binding"/>
</dbReference>
<dbReference type="InterPro" id="IPR050978">
    <property type="entry name" value="Y'_ATP-dependent_helicase"/>
</dbReference>
<dbReference type="PANTHER" id="PTHR31583">
    <property type="match status" value="1"/>
</dbReference>
<dbReference type="PANTHER" id="PTHR31583:SF2">
    <property type="match status" value="1"/>
</dbReference>
<dbReference type="Pfam" id="PF00270">
    <property type="entry name" value="DEAD"/>
    <property type="match status" value="1"/>
</dbReference>
<dbReference type="Pfam" id="PF00271">
    <property type="entry name" value="Helicase_C"/>
    <property type="match status" value="1"/>
</dbReference>
<dbReference type="Pfam" id="PF11603">
    <property type="entry name" value="Sir1"/>
    <property type="match status" value="1"/>
</dbReference>
<dbReference type="SMART" id="SM00487">
    <property type="entry name" value="DEXDc"/>
    <property type="match status" value="1"/>
</dbReference>
<dbReference type="SMART" id="SM00490">
    <property type="entry name" value="HELICc"/>
    <property type="match status" value="1"/>
</dbReference>
<dbReference type="SUPFAM" id="SSF52540">
    <property type="entry name" value="P-loop containing nucleoside triphosphate hydrolases"/>
    <property type="match status" value="1"/>
</dbReference>
<dbReference type="PROSITE" id="PS51192">
    <property type="entry name" value="HELICASE_ATP_BIND_1"/>
    <property type="match status" value="1"/>
</dbReference>
<dbReference type="PROSITE" id="PS51194">
    <property type="entry name" value="HELICASE_CTER"/>
    <property type="match status" value="1"/>
</dbReference>
<feature type="chain" id="PRO_0000268168" description="Y' element ATP-dependent helicase YLL067C">
    <location>
        <begin position="1"/>
        <end position="1374"/>
    </location>
</feature>
<feature type="domain" description="Helicase ATP-binding" evidence="1">
    <location>
        <begin position="375"/>
        <end position="552"/>
    </location>
</feature>
<feature type="domain" description="Helicase C-terminal" evidence="2">
    <location>
        <begin position="609"/>
        <end position="758"/>
    </location>
</feature>
<feature type="region of interest" description="Disordered" evidence="3">
    <location>
        <begin position="321"/>
        <end position="345"/>
    </location>
</feature>
<feature type="region of interest" description="Disordered" evidence="3">
    <location>
        <begin position="832"/>
        <end position="1035"/>
    </location>
</feature>
<feature type="short sequence motif" description="DEAH box">
    <location>
        <begin position="498"/>
        <end position="501"/>
    </location>
</feature>
<feature type="compositionally biased region" description="Low complexity" evidence="3">
    <location>
        <begin position="832"/>
        <end position="1011"/>
    </location>
</feature>
<feature type="compositionally biased region" description="Basic and acidic residues" evidence="3">
    <location>
        <begin position="1012"/>
        <end position="1035"/>
    </location>
</feature>
<feature type="binding site" evidence="1">
    <location>
        <begin position="388"/>
        <end position="395"/>
    </location>
    <ligand>
        <name>ATP</name>
        <dbReference type="ChEBI" id="CHEBI:30616"/>
    </ligand>
</feature>
<proteinExistence type="evidence at transcript level"/>
<keyword id="KW-0067">ATP-binding</keyword>
<keyword id="KW-0347">Helicase</keyword>
<keyword id="KW-0378">Hydrolase</keyword>
<keyword id="KW-0413">Isomerase</keyword>
<keyword id="KW-0547">Nucleotide-binding</keyword>
<keyword id="KW-1185">Reference proteome</keyword>
<accession>Q07888</accession>
<accession>D6VXU2</accession>
<accession>E9PAE6</accession>
<accession>O94145</accession>
<accession>Q12054</accession>